<comment type="function">
    <text evidence="1">NDH-1 shuttles electrons from NADH, via FMN and iron-sulfur (Fe-S) centers, to quinones in the respiratory chain. Couples the redox reaction to proton translocation (for every two electrons transferred, four hydrogen ions are translocated across the cytoplasmic membrane), and thus conserves the redox energy in a proton gradient (By similarity).</text>
</comment>
<comment type="catalytic activity">
    <reaction evidence="2">
        <text>a quinone + NADH + 5 H(+)(in) = a quinol + NAD(+) + 4 H(+)(out)</text>
        <dbReference type="Rhea" id="RHEA:57888"/>
        <dbReference type="ChEBI" id="CHEBI:15378"/>
        <dbReference type="ChEBI" id="CHEBI:24646"/>
        <dbReference type="ChEBI" id="CHEBI:57540"/>
        <dbReference type="ChEBI" id="CHEBI:57945"/>
        <dbReference type="ChEBI" id="CHEBI:132124"/>
    </reaction>
</comment>
<comment type="cofactor">
    <cofactor evidence="2">
        <name>[4Fe-4S] cluster</name>
        <dbReference type="ChEBI" id="CHEBI:49883"/>
    </cofactor>
    <text evidence="2">Binds 1 [4Fe-4S] cluster.</text>
</comment>
<comment type="subunit">
    <text evidence="2">NDH-1 is composed of 14 different subunits. Subunits NuoB, C, D, E, F, and G constitute the peripheral sector of the complex.</text>
</comment>
<comment type="subcellular location">
    <subcellularLocation>
        <location evidence="2">Cell inner membrane</location>
        <topology evidence="2">Peripheral membrane protein</topology>
        <orientation evidence="2">Cytoplasmic side</orientation>
    </subcellularLocation>
</comment>
<comment type="similarity">
    <text evidence="2">Belongs to the complex I 20 kDa subunit family.</text>
</comment>
<dbReference type="EC" id="7.1.1.-" evidence="2"/>
<dbReference type="EMBL" id="CP000378">
    <property type="protein sequence ID" value="ABF76541.1"/>
    <property type="molecule type" value="Genomic_DNA"/>
</dbReference>
<dbReference type="SMR" id="Q1BV14"/>
<dbReference type="HOGENOM" id="CLU_055737_7_3_4"/>
<dbReference type="GO" id="GO:0005886">
    <property type="term" value="C:plasma membrane"/>
    <property type="evidence" value="ECO:0007669"/>
    <property type="project" value="UniProtKB-SubCell"/>
</dbReference>
<dbReference type="GO" id="GO:0045271">
    <property type="term" value="C:respiratory chain complex I"/>
    <property type="evidence" value="ECO:0007669"/>
    <property type="project" value="TreeGrafter"/>
</dbReference>
<dbReference type="GO" id="GO:0051539">
    <property type="term" value="F:4 iron, 4 sulfur cluster binding"/>
    <property type="evidence" value="ECO:0007669"/>
    <property type="project" value="UniProtKB-KW"/>
</dbReference>
<dbReference type="GO" id="GO:0005506">
    <property type="term" value="F:iron ion binding"/>
    <property type="evidence" value="ECO:0007669"/>
    <property type="project" value="UniProtKB-UniRule"/>
</dbReference>
<dbReference type="GO" id="GO:0008137">
    <property type="term" value="F:NADH dehydrogenase (ubiquinone) activity"/>
    <property type="evidence" value="ECO:0007669"/>
    <property type="project" value="InterPro"/>
</dbReference>
<dbReference type="GO" id="GO:0050136">
    <property type="term" value="F:NADH:ubiquinone reductase (non-electrogenic) activity"/>
    <property type="evidence" value="ECO:0007669"/>
    <property type="project" value="UniProtKB-UniRule"/>
</dbReference>
<dbReference type="GO" id="GO:0048038">
    <property type="term" value="F:quinone binding"/>
    <property type="evidence" value="ECO:0007669"/>
    <property type="project" value="UniProtKB-KW"/>
</dbReference>
<dbReference type="GO" id="GO:0009060">
    <property type="term" value="P:aerobic respiration"/>
    <property type="evidence" value="ECO:0007669"/>
    <property type="project" value="TreeGrafter"/>
</dbReference>
<dbReference type="GO" id="GO:0015990">
    <property type="term" value="P:electron transport coupled proton transport"/>
    <property type="evidence" value="ECO:0007669"/>
    <property type="project" value="TreeGrafter"/>
</dbReference>
<dbReference type="FunFam" id="3.40.50.12280:FF:000001">
    <property type="entry name" value="NADH-quinone oxidoreductase subunit B 2"/>
    <property type="match status" value="1"/>
</dbReference>
<dbReference type="Gene3D" id="3.40.50.12280">
    <property type="match status" value="1"/>
</dbReference>
<dbReference type="HAMAP" id="MF_01356">
    <property type="entry name" value="NDH1_NuoB"/>
    <property type="match status" value="1"/>
</dbReference>
<dbReference type="InterPro" id="IPR006137">
    <property type="entry name" value="NADH_UbQ_OxRdtase-like_20kDa"/>
</dbReference>
<dbReference type="InterPro" id="IPR006138">
    <property type="entry name" value="NADH_UQ_OxRdtase_20Kd_su"/>
</dbReference>
<dbReference type="NCBIfam" id="TIGR01957">
    <property type="entry name" value="nuoB_fam"/>
    <property type="match status" value="1"/>
</dbReference>
<dbReference type="NCBIfam" id="NF005012">
    <property type="entry name" value="PRK06411.1"/>
    <property type="match status" value="1"/>
</dbReference>
<dbReference type="PANTHER" id="PTHR11995">
    <property type="entry name" value="NADH DEHYDROGENASE"/>
    <property type="match status" value="1"/>
</dbReference>
<dbReference type="PANTHER" id="PTHR11995:SF14">
    <property type="entry name" value="NADH DEHYDROGENASE [UBIQUINONE] IRON-SULFUR PROTEIN 7, MITOCHONDRIAL"/>
    <property type="match status" value="1"/>
</dbReference>
<dbReference type="Pfam" id="PF01058">
    <property type="entry name" value="Oxidored_q6"/>
    <property type="match status" value="1"/>
</dbReference>
<dbReference type="SUPFAM" id="SSF56770">
    <property type="entry name" value="HydA/Nqo6-like"/>
    <property type="match status" value="1"/>
</dbReference>
<dbReference type="PROSITE" id="PS01150">
    <property type="entry name" value="COMPLEX1_20K"/>
    <property type="match status" value="1"/>
</dbReference>
<evidence type="ECO:0000250" key="1"/>
<evidence type="ECO:0000255" key="2">
    <source>
        <dbReference type="HAMAP-Rule" id="MF_01356"/>
    </source>
</evidence>
<sequence length="159" mass="17560">MSIEGVLKEGFVTTTADKLINWTRTGSLWPMTFGLACCAVEMMHAGAARYDLDRFGVVFRPSPRQSDVMIVAGTLCNKMAPALRRVYDQMAEPRWVISMGSCANGGGYYHYSYSVVRGCDRIVPVDVYVPGCPPTAEALVYGVIQLQAKIRRTNTIARQ</sequence>
<name>NUOB_BURO1</name>
<accession>Q1BV14</accession>
<protein>
    <recommendedName>
        <fullName evidence="2">NADH-quinone oxidoreductase subunit B</fullName>
        <ecNumber evidence="2">7.1.1.-</ecNumber>
    </recommendedName>
    <alternativeName>
        <fullName evidence="2">NADH dehydrogenase I subunit B</fullName>
    </alternativeName>
    <alternativeName>
        <fullName evidence="2">NDH-1 subunit B</fullName>
    </alternativeName>
</protein>
<gene>
    <name evidence="2" type="primary">nuoB</name>
    <name type="ordered locus">Bcen_1636</name>
</gene>
<organism>
    <name type="scientific">Burkholderia orbicola (strain AU 1054)</name>
    <dbReference type="NCBI Taxonomy" id="331271"/>
    <lineage>
        <taxon>Bacteria</taxon>
        <taxon>Pseudomonadati</taxon>
        <taxon>Pseudomonadota</taxon>
        <taxon>Betaproteobacteria</taxon>
        <taxon>Burkholderiales</taxon>
        <taxon>Burkholderiaceae</taxon>
        <taxon>Burkholderia</taxon>
        <taxon>Burkholderia cepacia complex</taxon>
        <taxon>Burkholderia orbicola</taxon>
    </lineage>
</organism>
<proteinExistence type="inferred from homology"/>
<keyword id="KW-0004">4Fe-4S</keyword>
<keyword id="KW-0997">Cell inner membrane</keyword>
<keyword id="KW-1003">Cell membrane</keyword>
<keyword id="KW-0408">Iron</keyword>
<keyword id="KW-0411">Iron-sulfur</keyword>
<keyword id="KW-0472">Membrane</keyword>
<keyword id="KW-0479">Metal-binding</keyword>
<keyword id="KW-0520">NAD</keyword>
<keyword id="KW-0874">Quinone</keyword>
<keyword id="KW-1278">Translocase</keyword>
<keyword id="KW-0813">Transport</keyword>
<keyword id="KW-0830">Ubiquinone</keyword>
<feature type="chain" id="PRO_0000358365" description="NADH-quinone oxidoreductase subunit B">
    <location>
        <begin position="1"/>
        <end position="159"/>
    </location>
</feature>
<feature type="binding site" evidence="2">
    <location>
        <position position="37"/>
    </location>
    <ligand>
        <name>[4Fe-4S] cluster</name>
        <dbReference type="ChEBI" id="CHEBI:49883"/>
    </ligand>
</feature>
<feature type="binding site" evidence="2">
    <location>
        <position position="38"/>
    </location>
    <ligand>
        <name>[4Fe-4S] cluster</name>
        <dbReference type="ChEBI" id="CHEBI:49883"/>
    </ligand>
</feature>
<feature type="binding site" evidence="2">
    <location>
        <position position="102"/>
    </location>
    <ligand>
        <name>[4Fe-4S] cluster</name>
        <dbReference type="ChEBI" id="CHEBI:49883"/>
    </ligand>
</feature>
<feature type="binding site" evidence="2">
    <location>
        <position position="132"/>
    </location>
    <ligand>
        <name>[4Fe-4S] cluster</name>
        <dbReference type="ChEBI" id="CHEBI:49883"/>
    </ligand>
</feature>
<reference key="1">
    <citation type="submission" date="2006-05" db="EMBL/GenBank/DDBJ databases">
        <title>Complete sequence of chromosome 1 of Burkholderia cenocepacia AU 1054.</title>
        <authorList>
            <consortium name="US DOE Joint Genome Institute"/>
            <person name="Copeland A."/>
            <person name="Lucas S."/>
            <person name="Lapidus A."/>
            <person name="Barry K."/>
            <person name="Detter J.C."/>
            <person name="Glavina del Rio T."/>
            <person name="Hammon N."/>
            <person name="Israni S."/>
            <person name="Dalin E."/>
            <person name="Tice H."/>
            <person name="Pitluck S."/>
            <person name="Chain P."/>
            <person name="Malfatti S."/>
            <person name="Shin M."/>
            <person name="Vergez L."/>
            <person name="Schmutz J."/>
            <person name="Larimer F."/>
            <person name="Land M."/>
            <person name="Hauser L."/>
            <person name="Kyrpides N."/>
            <person name="Lykidis A."/>
            <person name="LiPuma J.J."/>
            <person name="Konstantinidis K."/>
            <person name="Tiedje J.M."/>
            <person name="Richardson P."/>
        </authorList>
    </citation>
    <scope>NUCLEOTIDE SEQUENCE [LARGE SCALE GENOMIC DNA]</scope>
    <source>
        <strain>AU 1054</strain>
    </source>
</reference>